<gene>
    <name evidence="1" type="primary">purA</name>
    <name type="ordered locus">Mmcs_0515</name>
</gene>
<evidence type="ECO:0000255" key="1">
    <source>
        <dbReference type="HAMAP-Rule" id="MF_00011"/>
    </source>
</evidence>
<proteinExistence type="inferred from homology"/>
<organism>
    <name type="scientific">Mycobacterium sp. (strain MCS)</name>
    <dbReference type="NCBI Taxonomy" id="164756"/>
    <lineage>
        <taxon>Bacteria</taxon>
        <taxon>Bacillati</taxon>
        <taxon>Actinomycetota</taxon>
        <taxon>Actinomycetes</taxon>
        <taxon>Mycobacteriales</taxon>
        <taxon>Mycobacteriaceae</taxon>
        <taxon>Mycobacterium</taxon>
    </lineage>
</organism>
<comment type="function">
    <text evidence="1">Plays an important role in the de novo pathway of purine nucleotide biosynthesis. Catalyzes the first committed step in the biosynthesis of AMP from IMP.</text>
</comment>
<comment type="catalytic activity">
    <reaction evidence="1">
        <text>IMP + L-aspartate + GTP = N(6)-(1,2-dicarboxyethyl)-AMP + GDP + phosphate + 2 H(+)</text>
        <dbReference type="Rhea" id="RHEA:15753"/>
        <dbReference type="ChEBI" id="CHEBI:15378"/>
        <dbReference type="ChEBI" id="CHEBI:29991"/>
        <dbReference type="ChEBI" id="CHEBI:37565"/>
        <dbReference type="ChEBI" id="CHEBI:43474"/>
        <dbReference type="ChEBI" id="CHEBI:57567"/>
        <dbReference type="ChEBI" id="CHEBI:58053"/>
        <dbReference type="ChEBI" id="CHEBI:58189"/>
        <dbReference type="EC" id="6.3.4.4"/>
    </reaction>
</comment>
<comment type="cofactor">
    <cofactor evidence="1">
        <name>Mg(2+)</name>
        <dbReference type="ChEBI" id="CHEBI:18420"/>
    </cofactor>
    <text evidence="1">Binds 1 Mg(2+) ion per subunit.</text>
</comment>
<comment type="pathway">
    <text evidence="1">Purine metabolism; AMP biosynthesis via de novo pathway; AMP from IMP: step 1/2.</text>
</comment>
<comment type="subunit">
    <text evidence="1">Homodimer.</text>
</comment>
<comment type="subcellular location">
    <subcellularLocation>
        <location evidence="1">Cytoplasm</location>
    </subcellularLocation>
</comment>
<comment type="similarity">
    <text evidence="1">Belongs to the adenylosuccinate synthetase family.</text>
</comment>
<name>PURA_MYCSS</name>
<keyword id="KW-0963">Cytoplasm</keyword>
<keyword id="KW-0342">GTP-binding</keyword>
<keyword id="KW-0436">Ligase</keyword>
<keyword id="KW-0460">Magnesium</keyword>
<keyword id="KW-0479">Metal-binding</keyword>
<keyword id="KW-0547">Nucleotide-binding</keyword>
<keyword id="KW-0658">Purine biosynthesis</keyword>
<protein>
    <recommendedName>
        <fullName evidence="1">Adenylosuccinate synthetase</fullName>
        <shortName evidence="1">AMPSase</shortName>
        <shortName evidence="1">AdSS</shortName>
        <ecNumber evidence="1">6.3.4.4</ecNumber>
    </recommendedName>
    <alternativeName>
        <fullName evidence="1">IMP--aspartate ligase</fullName>
    </alternativeName>
</protein>
<accession>Q1BEP8</accession>
<reference key="1">
    <citation type="submission" date="2006-06" db="EMBL/GenBank/DDBJ databases">
        <title>Complete sequence of chromosome of Mycobacterium sp. MCS.</title>
        <authorList>
            <consortium name="US DOE Joint Genome Institute"/>
            <person name="Copeland A."/>
            <person name="Lucas S."/>
            <person name="Lapidus A."/>
            <person name="Barry K."/>
            <person name="Detter J.C."/>
            <person name="Glavina del Rio T."/>
            <person name="Hammon N."/>
            <person name="Israni S."/>
            <person name="Dalin E."/>
            <person name="Tice H."/>
            <person name="Pitluck S."/>
            <person name="Martinez M."/>
            <person name="Schmutz J."/>
            <person name="Larimer F."/>
            <person name="Land M."/>
            <person name="Hauser L."/>
            <person name="Kyrpides N."/>
            <person name="Kim E."/>
            <person name="Miller C.D."/>
            <person name="Hughes J.E."/>
            <person name="Anderson A.J."/>
            <person name="Sims R.C."/>
            <person name="Richardson P."/>
        </authorList>
    </citation>
    <scope>NUCLEOTIDE SEQUENCE [LARGE SCALE GENOMIC DNA]</scope>
    <source>
        <strain>MCS</strain>
    </source>
</reference>
<dbReference type="EC" id="6.3.4.4" evidence="1"/>
<dbReference type="EMBL" id="CP000384">
    <property type="protein sequence ID" value="ABG06636.1"/>
    <property type="molecule type" value="Genomic_DNA"/>
</dbReference>
<dbReference type="SMR" id="Q1BEP8"/>
<dbReference type="KEGG" id="mmc:Mmcs_0515"/>
<dbReference type="HOGENOM" id="CLU_029848_0_0_11"/>
<dbReference type="BioCyc" id="MSP164756:G1G6O-526-MONOMER"/>
<dbReference type="UniPathway" id="UPA00075">
    <property type="reaction ID" value="UER00335"/>
</dbReference>
<dbReference type="GO" id="GO:0005737">
    <property type="term" value="C:cytoplasm"/>
    <property type="evidence" value="ECO:0007669"/>
    <property type="project" value="UniProtKB-SubCell"/>
</dbReference>
<dbReference type="GO" id="GO:0004019">
    <property type="term" value="F:adenylosuccinate synthase activity"/>
    <property type="evidence" value="ECO:0007669"/>
    <property type="project" value="UniProtKB-UniRule"/>
</dbReference>
<dbReference type="GO" id="GO:0005525">
    <property type="term" value="F:GTP binding"/>
    <property type="evidence" value="ECO:0007669"/>
    <property type="project" value="UniProtKB-UniRule"/>
</dbReference>
<dbReference type="GO" id="GO:0000287">
    <property type="term" value="F:magnesium ion binding"/>
    <property type="evidence" value="ECO:0007669"/>
    <property type="project" value="UniProtKB-UniRule"/>
</dbReference>
<dbReference type="GO" id="GO:0044208">
    <property type="term" value="P:'de novo' AMP biosynthetic process"/>
    <property type="evidence" value="ECO:0007669"/>
    <property type="project" value="UniProtKB-UniRule"/>
</dbReference>
<dbReference type="GO" id="GO:0046040">
    <property type="term" value="P:IMP metabolic process"/>
    <property type="evidence" value="ECO:0007669"/>
    <property type="project" value="TreeGrafter"/>
</dbReference>
<dbReference type="CDD" id="cd03108">
    <property type="entry name" value="AdSS"/>
    <property type="match status" value="1"/>
</dbReference>
<dbReference type="FunFam" id="1.10.300.10:FF:000001">
    <property type="entry name" value="Adenylosuccinate synthetase"/>
    <property type="match status" value="1"/>
</dbReference>
<dbReference type="FunFam" id="3.90.170.10:FF:000001">
    <property type="entry name" value="Adenylosuccinate synthetase"/>
    <property type="match status" value="1"/>
</dbReference>
<dbReference type="Gene3D" id="3.40.440.10">
    <property type="entry name" value="Adenylosuccinate Synthetase, subunit A, domain 1"/>
    <property type="match status" value="1"/>
</dbReference>
<dbReference type="Gene3D" id="1.10.300.10">
    <property type="entry name" value="Adenylosuccinate Synthetase, subunit A, domain 2"/>
    <property type="match status" value="1"/>
</dbReference>
<dbReference type="Gene3D" id="3.90.170.10">
    <property type="entry name" value="Adenylosuccinate Synthetase, subunit A, domain 3"/>
    <property type="match status" value="1"/>
</dbReference>
<dbReference type="HAMAP" id="MF_00011">
    <property type="entry name" value="Adenylosucc_synth"/>
    <property type="match status" value="1"/>
</dbReference>
<dbReference type="InterPro" id="IPR018220">
    <property type="entry name" value="Adenylosuccin_syn_GTP-bd"/>
</dbReference>
<dbReference type="InterPro" id="IPR033128">
    <property type="entry name" value="Adenylosuccin_syn_Lys_AS"/>
</dbReference>
<dbReference type="InterPro" id="IPR042109">
    <property type="entry name" value="Adenylosuccinate_synth_dom1"/>
</dbReference>
<dbReference type="InterPro" id="IPR042110">
    <property type="entry name" value="Adenylosuccinate_synth_dom2"/>
</dbReference>
<dbReference type="InterPro" id="IPR042111">
    <property type="entry name" value="Adenylosuccinate_synth_dom3"/>
</dbReference>
<dbReference type="InterPro" id="IPR001114">
    <property type="entry name" value="Adenylosuccinate_synthetase"/>
</dbReference>
<dbReference type="InterPro" id="IPR027417">
    <property type="entry name" value="P-loop_NTPase"/>
</dbReference>
<dbReference type="NCBIfam" id="NF002223">
    <property type="entry name" value="PRK01117.1"/>
    <property type="match status" value="1"/>
</dbReference>
<dbReference type="NCBIfam" id="TIGR00184">
    <property type="entry name" value="purA"/>
    <property type="match status" value="1"/>
</dbReference>
<dbReference type="PANTHER" id="PTHR11846">
    <property type="entry name" value="ADENYLOSUCCINATE SYNTHETASE"/>
    <property type="match status" value="1"/>
</dbReference>
<dbReference type="PANTHER" id="PTHR11846:SF0">
    <property type="entry name" value="ADENYLOSUCCINATE SYNTHETASE"/>
    <property type="match status" value="1"/>
</dbReference>
<dbReference type="Pfam" id="PF00709">
    <property type="entry name" value="Adenylsucc_synt"/>
    <property type="match status" value="1"/>
</dbReference>
<dbReference type="SMART" id="SM00788">
    <property type="entry name" value="Adenylsucc_synt"/>
    <property type="match status" value="1"/>
</dbReference>
<dbReference type="SUPFAM" id="SSF52540">
    <property type="entry name" value="P-loop containing nucleoside triphosphate hydrolases"/>
    <property type="match status" value="1"/>
</dbReference>
<dbReference type="PROSITE" id="PS01266">
    <property type="entry name" value="ADENYLOSUCCIN_SYN_1"/>
    <property type="match status" value="1"/>
</dbReference>
<dbReference type="PROSITE" id="PS00513">
    <property type="entry name" value="ADENYLOSUCCIN_SYN_2"/>
    <property type="match status" value="1"/>
</dbReference>
<sequence>MPAIVLIGAQWGDEGKGKATDLLGGRVQWVVRYQGGNNAGHTVVLPTGENFALHLIPSGILTPGVTNVIGNGVVVDPGVLLTELRGLEERGVDTERLLISADAHLLMPYHVAIDKVVERYAGSKKIGTTGRGIGPCYQDKIARQGIRVADVLDPAVLAEKIEGALELKNQVLVKIYNRKALEPAEVVENLLEQAEGFKHRIADARLLLNQALERDEIVLLEGSQGTLLDVDHGTYPYVTSSNPTAGGASVGSGIGPTRITTVLGILKAYTTRVGSGPFPTELFDEHGAYLAKTGGEVGVTTGRARRCGWFDAVIARYATRVNGITDYFLTKLDVLSSLETVPICVGYTIDGKRTDEMPMTQSDIARAEPVYEELPGWWEDISGAREFDDLPAKARDYVLRLEELAGAHVSCIGVGPGRDQTIVRRDVLAPS</sequence>
<feature type="chain" id="PRO_1000000871" description="Adenylosuccinate synthetase">
    <location>
        <begin position="1"/>
        <end position="431"/>
    </location>
</feature>
<feature type="active site" description="Proton acceptor" evidence="1">
    <location>
        <position position="13"/>
    </location>
</feature>
<feature type="active site" description="Proton donor" evidence="1">
    <location>
        <position position="41"/>
    </location>
</feature>
<feature type="binding site" evidence="1">
    <location>
        <begin position="12"/>
        <end position="18"/>
    </location>
    <ligand>
        <name>GTP</name>
        <dbReference type="ChEBI" id="CHEBI:37565"/>
    </ligand>
</feature>
<feature type="binding site" description="in other chain" evidence="1">
    <location>
        <begin position="13"/>
        <end position="16"/>
    </location>
    <ligand>
        <name>IMP</name>
        <dbReference type="ChEBI" id="CHEBI:58053"/>
        <note>ligand shared between dimeric partners</note>
    </ligand>
</feature>
<feature type="binding site" evidence="1">
    <location>
        <position position="13"/>
    </location>
    <ligand>
        <name>Mg(2+)</name>
        <dbReference type="ChEBI" id="CHEBI:18420"/>
    </ligand>
</feature>
<feature type="binding site" description="in other chain" evidence="1">
    <location>
        <begin position="38"/>
        <end position="41"/>
    </location>
    <ligand>
        <name>IMP</name>
        <dbReference type="ChEBI" id="CHEBI:58053"/>
        <note>ligand shared between dimeric partners</note>
    </ligand>
</feature>
<feature type="binding site" evidence="1">
    <location>
        <begin position="40"/>
        <end position="42"/>
    </location>
    <ligand>
        <name>GTP</name>
        <dbReference type="ChEBI" id="CHEBI:37565"/>
    </ligand>
</feature>
<feature type="binding site" evidence="1">
    <location>
        <position position="40"/>
    </location>
    <ligand>
        <name>Mg(2+)</name>
        <dbReference type="ChEBI" id="CHEBI:18420"/>
    </ligand>
</feature>
<feature type="binding site" description="in other chain" evidence="1">
    <location>
        <position position="129"/>
    </location>
    <ligand>
        <name>IMP</name>
        <dbReference type="ChEBI" id="CHEBI:58053"/>
        <note>ligand shared between dimeric partners</note>
    </ligand>
</feature>
<feature type="binding site" evidence="1">
    <location>
        <position position="143"/>
    </location>
    <ligand>
        <name>IMP</name>
        <dbReference type="ChEBI" id="CHEBI:58053"/>
        <note>ligand shared between dimeric partners</note>
    </ligand>
</feature>
<feature type="binding site" description="in other chain" evidence="1">
    <location>
        <position position="224"/>
    </location>
    <ligand>
        <name>IMP</name>
        <dbReference type="ChEBI" id="CHEBI:58053"/>
        <note>ligand shared between dimeric partners</note>
    </ligand>
</feature>
<feature type="binding site" description="in other chain" evidence="1">
    <location>
        <position position="239"/>
    </location>
    <ligand>
        <name>IMP</name>
        <dbReference type="ChEBI" id="CHEBI:58053"/>
        <note>ligand shared between dimeric partners</note>
    </ligand>
</feature>
<feature type="binding site" evidence="1">
    <location>
        <begin position="299"/>
        <end position="305"/>
    </location>
    <ligand>
        <name>substrate</name>
    </ligand>
</feature>
<feature type="binding site" description="in other chain" evidence="1">
    <location>
        <position position="303"/>
    </location>
    <ligand>
        <name>IMP</name>
        <dbReference type="ChEBI" id="CHEBI:58053"/>
        <note>ligand shared between dimeric partners</note>
    </ligand>
</feature>
<feature type="binding site" evidence="1">
    <location>
        <position position="305"/>
    </location>
    <ligand>
        <name>GTP</name>
        <dbReference type="ChEBI" id="CHEBI:37565"/>
    </ligand>
</feature>
<feature type="binding site" evidence="1">
    <location>
        <begin position="331"/>
        <end position="333"/>
    </location>
    <ligand>
        <name>GTP</name>
        <dbReference type="ChEBI" id="CHEBI:37565"/>
    </ligand>
</feature>
<feature type="binding site" evidence="1">
    <location>
        <begin position="413"/>
        <end position="415"/>
    </location>
    <ligand>
        <name>GTP</name>
        <dbReference type="ChEBI" id="CHEBI:37565"/>
    </ligand>
</feature>